<accession>Q8DNX8</accession>
<gene>
    <name evidence="1" type="primary">thrS</name>
    <name type="ordered locus">spr1472</name>
</gene>
<proteinExistence type="inferred from homology"/>
<dbReference type="EC" id="6.1.1.3" evidence="1"/>
<dbReference type="EMBL" id="AE007317">
    <property type="protein sequence ID" value="AAL00276.1"/>
    <property type="status" value="ALT_INIT"/>
    <property type="molecule type" value="Genomic_DNA"/>
</dbReference>
<dbReference type="PIR" id="G98055">
    <property type="entry name" value="G98055"/>
</dbReference>
<dbReference type="RefSeq" id="NP_359065.2">
    <property type="nucleotide sequence ID" value="NC_003098.1"/>
</dbReference>
<dbReference type="RefSeq" id="WP_000608365.1">
    <property type="nucleotide sequence ID" value="NC_003098.1"/>
</dbReference>
<dbReference type="SMR" id="Q8DNX8"/>
<dbReference type="STRING" id="171101.spr1472"/>
<dbReference type="KEGG" id="spr:spr1472"/>
<dbReference type="PATRIC" id="fig|171101.6.peg.1592"/>
<dbReference type="eggNOG" id="COG0441">
    <property type="taxonomic scope" value="Bacteria"/>
</dbReference>
<dbReference type="HOGENOM" id="CLU_008554_3_2_9"/>
<dbReference type="Proteomes" id="UP000000586">
    <property type="component" value="Chromosome"/>
</dbReference>
<dbReference type="GO" id="GO:0005737">
    <property type="term" value="C:cytoplasm"/>
    <property type="evidence" value="ECO:0007669"/>
    <property type="project" value="UniProtKB-SubCell"/>
</dbReference>
<dbReference type="GO" id="GO:0005524">
    <property type="term" value="F:ATP binding"/>
    <property type="evidence" value="ECO:0007669"/>
    <property type="project" value="UniProtKB-UniRule"/>
</dbReference>
<dbReference type="GO" id="GO:0140096">
    <property type="term" value="F:catalytic activity, acting on a protein"/>
    <property type="evidence" value="ECO:0007669"/>
    <property type="project" value="UniProtKB-ARBA"/>
</dbReference>
<dbReference type="GO" id="GO:0046872">
    <property type="term" value="F:metal ion binding"/>
    <property type="evidence" value="ECO:0007669"/>
    <property type="project" value="UniProtKB-KW"/>
</dbReference>
<dbReference type="GO" id="GO:0004829">
    <property type="term" value="F:threonine-tRNA ligase activity"/>
    <property type="evidence" value="ECO:0000318"/>
    <property type="project" value="GO_Central"/>
</dbReference>
<dbReference type="GO" id="GO:0016740">
    <property type="term" value="F:transferase activity"/>
    <property type="evidence" value="ECO:0007669"/>
    <property type="project" value="UniProtKB-ARBA"/>
</dbReference>
<dbReference type="GO" id="GO:0000049">
    <property type="term" value="F:tRNA binding"/>
    <property type="evidence" value="ECO:0007669"/>
    <property type="project" value="UniProtKB-KW"/>
</dbReference>
<dbReference type="GO" id="GO:0006435">
    <property type="term" value="P:threonyl-tRNA aminoacylation"/>
    <property type="evidence" value="ECO:0000318"/>
    <property type="project" value="GO_Central"/>
</dbReference>
<dbReference type="CDD" id="cd01667">
    <property type="entry name" value="TGS_ThrRS"/>
    <property type="match status" value="1"/>
</dbReference>
<dbReference type="CDD" id="cd00860">
    <property type="entry name" value="ThrRS_anticodon"/>
    <property type="match status" value="1"/>
</dbReference>
<dbReference type="CDD" id="cd00771">
    <property type="entry name" value="ThrRS_core"/>
    <property type="match status" value="1"/>
</dbReference>
<dbReference type="FunFam" id="3.10.20.30:FF:000005">
    <property type="entry name" value="Threonine--tRNA ligase"/>
    <property type="match status" value="1"/>
</dbReference>
<dbReference type="FunFam" id="3.30.54.20:FF:000002">
    <property type="entry name" value="Threonine--tRNA ligase"/>
    <property type="match status" value="1"/>
</dbReference>
<dbReference type="FunFam" id="3.30.930.10:FF:000002">
    <property type="entry name" value="Threonine--tRNA ligase"/>
    <property type="match status" value="1"/>
</dbReference>
<dbReference type="FunFam" id="3.40.50.800:FF:000001">
    <property type="entry name" value="Threonine--tRNA ligase"/>
    <property type="match status" value="1"/>
</dbReference>
<dbReference type="FunFam" id="3.30.980.10:FF:000005">
    <property type="entry name" value="Threonyl-tRNA synthetase, mitochondrial"/>
    <property type="match status" value="1"/>
</dbReference>
<dbReference type="Gene3D" id="3.10.20.30">
    <property type="match status" value="1"/>
</dbReference>
<dbReference type="Gene3D" id="3.30.54.20">
    <property type="match status" value="1"/>
</dbReference>
<dbReference type="Gene3D" id="3.40.50.800">
    <property type="entry name" value="Anticodon-binding domain"/>
    <property type="match status" value="1"/>
</dbReference>
<dbReference type="Gene3D" id="3.30.930.10">
    <property type="entry name" value="Bira Bifunctional Protein, Domain 2"/>
    <property type="match status" value="1"/>
</dbReference>
<dbReference type="Gene3D" id="3.30.980.10">
    <property type="entry name" value="Threonyl-trna Synthetase, Chain A, domain 2"/>
    <property type="match status" value="1"/>
</dbReference>
<dbReference type="HAMAP" id="MF_00184">
    <property type="entry name" value="Thr_tRNA_synth"/>
    <property type="match status" value="1"/>
</dbReference>
<dbReference type="InterPro" id="IPR002314">
    <property type="entry name" value="aa-tRNA-synt_IIb"/>
</dbReference>
<dbReference type="InterPro" id="IPR006195">
    <property type="entry name" value="aa-tRNA-synth_II"/>
</dbReference>
<dbReference type="InterPro" id="IPR045864">
    <property type="entry name" value="aa-tRNA-synth_II/BPL/LPL"/>
</dbReference>
<dbReference type="InterPro" id="IPR004154">
    <property type="entry name" value="Anticodon-bd"/>
</dbReference>
<dbReference type="InterPro" id="IPR036621">
    <property type="entry name" value="Anticodon-bd_dom_sf"/>
</dbReference>
<dbReference type="InterPro" id="IPR012675">
    <property type="entry name" value="Beta-grasp_dom_sf"/>
</dbReference>
<dbReference type="InterPro" id="IPR004095">
    <property type="entry name" value="TGS"/>
</dbReference>
<dbReference type="InterPro" id="IPR012676">
    <property type="entry name" value="TGS-like"/>
</dbReference>
<dbReference type="InterPro" id="IPR002320">
    <property type="entry name" value="Thr-tRNA-ligase_IIa"/>
</dbReference>
<dbReference type="InterPro" id="IPR018163">
    <property type="entry name" value="Thr/Ala-tRNA-synth_IIc_edit"/>
</dbReference>
<dbReference type="InterPro" id="IPR047246">
    <property type="entry name" value="ThrRS_anticodon"/>
</dbReference>
<dbReference type="InterPro" id="IPR033728">
    <property type="entry name" value="ThrRS_core"/>
</dbReference>
<dbReference type="InterPro" id="IPR012947">
    <property type="entry name" value="tRNA_SAD"/>
</dbReference>
<dbReference type="NCBIfam" id="TIGR00418">
    <property type="entry name" value="thrS"/>
    <property type="match status" value="1"/>
</dbReference>
<dbReference type="PANTHER" id="PTHR11451:SF56">
    <property type="entry name" value="THREONINE--TRNA LIGASE 1"/>
    <property type="match status" value="1"/>
</dbReference>
<dbReference type="PANTHER" id="PTHR11451">
    <property type="entry name" value="THREONINE-TRNA LIGASE"/>
    <property type="match status" value="1"/>
</dbReference>
<dbReference type="Pfam" id="PF03129">
    <property type="entry name" value="HGTP_anticodon"/>
    <property type="match status" value="1"/>
</dbReference>
<dbReference type="Pfam" id="PF02824">
    <property type="entry name" value="TGS"/>
    <property type="match status" value="1"/>
</dbReference>
<dbReference type="Pfam" id="PF00587">
    <property type="entry name" value="tRNA-synt_2b"/>
    <property type="match status" value="1"/>
</dbReference>
<dbReference type="Pfam" id="PF07973">
    <property type="entry name" value="tRNA_SAD"/>
    <property type="match status" value="1"/>
</dbReference>
<dbReference type="PRINTS" id="PR01047">
    <property type="entry name" value="TRNASYNTHTHR"/>
</dbReference>
<dbReference type="SMART" id="SM00863">
    <property type="entry name" value="tRNA_SAD"/>
    <property type="match status" value="1"/>
</dbReference>
<dbReference type="SUPFAM" id="SSF52954">
    <property type="entry name" value="Class II aaRS ABD-related"/>
    <property type="match status" value="1"/>
</dbReference>
<dbReference type="SUPFAM" id="SSF55681">
    <property type="entry name" value="Class II aaRS and biotin synthetases"/>
    <property type="match status" value="1"/>
</dbReference>
<dbReference type="SUPFAM" id="SSF81271">
    <property type="entry name" value="TGS-like"/>
    <property type="match status" value="1"/>
</dbReference>
<dbReference type="SUPFAM" id="SSF55186">
    <property type="entry name" value="ThrRS/AlaRS common domain"/>
    <property type="match status" value="1"/>
</dbReference>
<dbReference type="PROSITE" id="PS50862">
    <property type="entry name" value="AA_TRNA_LIGASE_II"/>
    <property type="match status" value="1"/>
</dbReference>
<dbReference type="PROSITE" id="PS51880">
    <property type="entry name" value="TGS"/>
    <property type="match status" value="1"/>
</dbReference>
<organism>
    <name type="scientific">Streptococcus pneumoniae (strain ATCC BAA-255 / R6)</name>
    <dbReference type="NCBI Taxonomy" id="171101"/>
    <lineage>
        <taxon>Bacteria</taxon>
        <taxon>Bacillati</taxon>
        <taxon>Bacillota</taxon>
        <taxon>Bacilli</taxon>
        <taxon>Lactobacillales</taxon>
        <taxon>Streptococcaceae</taxon>
        <taxon>Streptococcus</taxon>
    </lineage>
</organism>
<reference key="1">
    <citation type="journal article" date="2001" name="J. Bacteriol.">
        <title>Genome of the bacterium Streptococcus pneumoniae strain R6.</title>
        <authorList>
            <person name="Hoskins J."/>
            <person name="Alborn W.E. Jr."/>
            <person name="Arnold J."/>
            <person name="Blaszczak L.C."/>
            <person name="Burgett S."/>
            <person name="DeHoff B.S."/>
            <person name="Estrem S.T."/>
            <person name="Fritz L."/>
            <person name="Fu D.-J."/>
            <person name="Fuller W."/>
            <person name="Geringer C."/>
            <person name="Gilmour R."/>
            <person name="Glass J.S."/>
            <person name="Khoja H."/>
            <person name="Kraft A.R."/>
            <person name="Lagace R.E."/>
            <person name="LeBlanc D.J."/>
            <person name="Lee L.N."/>
            <person name="Lefkowitz E.J."/>
            <person name="Lu J."/>
            <person name="Matsushima P."/>
            <person name="McAhren S.M."/>
            <person name="McHenney M."/>
            <person name="McLeaster K."/>
            <person name="Mundy C.W."/>
            <person name="Nicas T.I."/>
            <person name="Norris F.H."/>
            <person name="O'Gara M."/>
            <person name="Peery R.B."/>
            <person name="Robertson G.T."/>
            <person name="Rockey P."/>
            <person name="Sun P.-M."/>
            <person name="Winkler M.E."/>
            <person name="Yang Y."/>
            <person name="Young-Bellido M."/>
            <person name="Zhao G."/>
            <person name="Zook C.A."/>
            <person name="Baltz R.H."/>
            <person name="Jaskunas S.R."/>
            <person name="Rosteck P.R. Jr."/>
            <person name="Skatrud P.L."/>
            <person name="Glass J.I."/>
        </authorList>
    </citation>
    <scope>NUCLEOTIDE SEQUENCE [LARGE SCALE GENOMIC DNA]</scope>
    <source>
        <strain>ATCC BAA-255 / R6</strain>
    </source>
</reference>
<evidence type="ECO:0000255" key="1">
    <source>
        <dbReference type="HAMAP-Rule" id="MF_00184"/>
    </source>
</evidence>
<evidence type="ECO:0000255" key="2">
    <source>
        <dbReference type="PROSITE-ProRule" id="PRU01228"/>
    </source>
</evidence>
<evidence type="ECO:0000305" key="3"/>
<feature type="chain" id="PRO_0000101061" description="Threonine--tRNA ligase">
    <location>
        <begin position="1"/>
        <end position="647"/>
    </location>
</feature>
<feature type="domain" description="TGS" evidence="2">
    <location>
        <begin position="1"/>
        <end position="61"/>
    </location>
</feature>
<feature type="region of interest" description="Catalytic" evidence="1">
    <location>
        <begin position="242"/>
        <end position="540"/>
    </location>
</feature>
<feature type="binding site" evidence="1">
    <location>
        <position position="336"/>
    </location>
    <ligand>
        <name>Zn(2+)</name>
        <dbReference type="ChEBI" id="CHEBI:29105"/>
    </ligand>
</feature>
<feature type="binding site" evidence="1">
    <location>
        <position position="387"/>
    </location>
    <ligand>
        <name>Zn(2+)</name>
        <dbReference type="ChEBI" id="CHEBI:29105"/>
    </ligand>
</feature>
<feature type="binding site" evidence="1">
    <location>
        <position position="517"/>
    </location>
    <ligand>
        <name>Zn(2+)</name>
        <dbReference type="ChEBI" id="CHEBI:29105"/>
    </ligand>
</feature>
<sequence length="647" mass="74764">MINITFPDGAVREFESGVTTFEIAQSISNSLAKKALAGKFNGKLIDTTRAITEDGSIEIVTPDHEDALPILRHSATHLFAQAARRLFPDIHLGVGPAIEDGFYYDTDHTAGQISNEDLPRIEEEMQKIVKENFPSIREEVTKDEAREIFKNDPYKLELIEEHSEDEGGLTIYRQGEYVDLCRGPHVPSTGRIQIFHLLHVAGAYWRGNSDNAMMQRIYGTAWFDKKDLKNYLQMREEAKERDHRKLGKELDLFMISQEVGQGLPFWLPNGATIRRELERYIVNKELVSGYQHVYTPPLASVELYKTSGHWDHYQEDMFPTMDMGDGEEFVLRPMNCPHHIQVFKHHVHSYRELPIRIAEIGMMHRYEKSGALTGLQRVREMSLNDGHLFVTPEQIQEEFQRALQLIIDVYEDFNLTDYRFRLSLRDPQDTHKYFDNDEMWENAQTMLRAALDEMGVDYFEAEGEAAFYGPKLDIQIKTALGKEETLSTIQLDFLLPERFDLKYIGADGEDHRPVMIHRGVISTMERFTAILIENYKGAFPTWLAPHQVTLIPVSNEKHVDYAWEVAKKLRDRGVRADVDERNEKMQFKIRASQTSKIPYQLIVGDKEMEDETVNVRRYGQKETQTVSVDNFVQAILADIANKSRVEK</sequence>
<keyword id="KW-0030">Aminoacyl-tRNA synthetase</keyword>
<keyword id="KW-0067">ATP-binding</keyword>
<keyword id="KW-0963">Cytoplasm</keyword>
<keyword id="KW-0436">Ligase</keyword>
<keyword id="KW-0479">Metal-binding</keyword>
<keyword id="KW-0547">Nucleotide-binding</keyword>
<keyword id="KW-0648">Protein biosynthesis</keyword>
<keyword id="KW-1185">Reference proteome</keyword>
<keyword id="KW-0694">RNA-binding</keyword>
<keyword id="KW-0820">tRNA-binding</keyword>
<keyword id="KW-0862">Zinc</keyword>
<protein>
    <recommendedName>
        <fullName evidence="1">Threonine--tRNA ligase</fullName>
        <ecNumber evidence="1">6.1.1.3</ecNumber>
    </recommendedName>
    <alternativeName>
        <fullName evidence="1">Threonyl-tRNA synthetase</fullName>
        <shortName evidence="1">ThrRS</shortName>
    </alternativeName>
</protein>
<name>SYT_STRR6</name>
<comment type="function">
    <text evidence="1">Catalyzes the attachment of threonine to tRNA(Thr) in a two-step reaction: L-threonine is first activated by ATP to form Thr-AMP and then transferred to the acceptor end of tRNA(Thr). Also edits incorrectly charged L-seryl-tRNA(Thr).</text>
</comment>
<comment type="catalytic activity">
    <reaction evidence="1">
        <text>tRNA(Thr) + L-threonine + ATP = L-threonyl-tRNA(Thr) + AMP + diphosphate + H(+)</text>
        <dbReference type="Rhea" id="RHEA:24624"/>
        <dbReference type="Rhea" id="RHEA-COMP:9670"/>
        <dbReference type="Rhea" id="RHEA-COMP:9704"/>
        <dbReference type="ChEBI" id="CHEBI:15378"/>
        <dbReference type="ChEBI" id="CHEBI:30616"/>
        <dbReference type="ChEBI" id="CHEBI:33019"/>
        <dbReference type="ChEBI" id="CHEBI:57926"/>
        <dbReference type="ChEBI" id="CHEBI:78442"/>
        <dbReference type="ChEBI" id="CHEBI:78534"/>
        <dbReference type="ChEBI" id="CHEBI:456215"/>
        <dbReference type="EC" id="6.1.1.3"/>
    </reaction>
</comment>
<comment type="cofactor">
    <cofactor evidence="1">
        <name>Zn(2+)</name>
        <dbReference type="ChEBI" id="CHEBI:29105"/>
    </cofactor>
    <text evidence="1">Binds 1 zinc ion per subunit.</text>
</comment>
<comment type="subunit">
    <text evidence="1">Homodimer.</text>
</comment>
<comment type="subcellular location">
    <subcellularLocation>
        <location evidence="1">Cytoplasm</location>
    </subcellularLocation>
</comment>
<comment type="similarity">
    <text evidence="1">Belongs to the class-II aminoacyl-tRNA synthetase family.</text>
</comment>
<comment type="sequence caution" evidence="3">
    <conflict type="erroneous initiation">
        <sequence resource="EMBL-CDS" id="AAL00276"/>
    </conflict>
    <text>Extended N-terminus.</text>
</comment>